<organism>
    <name type="scientific">Saccharophagus degradans (strain 2-40 / ATCC 43961 / DSM 17024)</name>
    <dbReference type="NCBI Taxonomy" id="203122"/>
    <lineage>
        <taxon>Bacteria</taxon>
        <taxon>Pseudomonadati</taxon>
        <taxon>Pseudomonadota</taxon>
        <taxon>Gammaproteobacteria</taxon>
        <taxon>Cellvibrionales</taxon>
        <taxon>Cellvibrionaceae</taxon>
        <taxon>Saccharophagus</taxon>
    </lineage>
</organism>
<protein>
    <recommendedName>
        <fullName evidence="1">Cyclic pyranopterin monophosphate synthase</fullName>
        <ecNumber evidence="1">4.6.1.17</ecNumber>
    </recommendedName>
    <alternativeName>
        <fullName evidence="1">Molybdenum cofactor biosynthesis protein C</fullName>
    </alternativeName>
</protein>
<keyword id="KW-0456">Lyase</keyword>
<keyword id="KW-0501">Molybdenum cofactor biosynthesis</keyword>
<keyword id="KW-1185">Reference proteome</keyword>
<gene>
    <name evidence="1" type="primary">moaC</name>
    <name type="ordered locus">Sde_2608</name>
</gene>
<dbReference type="EC" id="4.6.1.17" evidence="1"/>
<dbReference type="EMBL" id="CP000282">
    <property type="protein sequence ID" value="ABD81868.1"/>
    <property type="molecule type" value="Genomic_DNA"/>
</dbReference>
<dbReference type="RefSeq" id="WP_011469085.1">
    <property type="nucleotide sequence ID" value="NC_007912.1"/>
</dbReference>
<dbReference type="SMR" id="Q21HG1"/>
<dbReference type="STRING" id="203122.Sde_2608"/>
<dbReference type="GeneID" id="98614270"/>
<dbReference type="KEGG" id="sde:Sde_2608"/>
<dbReference type="eggNOG" id="COG0315">
    <property type="taxonomic scope" value="Bacteria"/>
</dbReference>
<dbReference type="HOGENOM" id="CLU_074693_1_1_6"/>
<dbReference type="OrthoDB" id="9794429at2"/>
<dbReference type="UniPathway" id="UPA00344"/>
<dbReference type="Proteomes" id="UP000001947">
    <property type="component" value="Chromosome"/>
</dbReference>
<dbReference type="GO" id="GO:0061799">
    <property type="term" value="F:cyclic pyranopterin monophosphate synthase activity"/>
    <property type="evidence" value="ECO:0007669"/>
    <property type="project" value="UniProtKB-UniRule"/>
</dbReference>
<dbReference type="GO" id="GO:0061798">
    <property type="term" value="F:GTP 3',8'-cyclase activity"/>
    <property type="evidence" value="ECO:0007669"/>
    <property type="project" value="TreeGrafter"/>
</dbReference>
<dbReference type="GO" id="GO:0006777">
    <property type="term" value="P:Mo-molybdopterin cofactor biosynthetic process"/>
    <property type="evidence" value="ECO:0007669"/>
    <property type="project" value="UniProtKB-UniRule"/>
</dbReference>
<dbReference type="CDD" id="cd01420">
    <property type="entry name" value="MoaC_PE"/>
    <property type="match status" value="1"/>
</dbReference>
<dbReference type="FunFam" id="3.30.70.640:FF:000001">
    <property type="entry name" value="Cyclic pyranopterin monophosphate synthase"/>
    <property type="match status" value="1"/>
</dbReference>
<dbReference type="Gene3D" id="3.30.70.640">
    <property type="entry name" value="Molybdopterin cofactor biosynthesis C (MoaC) domain"/>
    <property type="match status" value="1"/>
</dbReference>
<dbReference type="HAMAP" id="MF_01224_B">
    <property type="entry name" value="MoaC_B"/>
    <property type="match status" value="1"/>
</dbReference>
<dbReference type="InterPro" id="IPR023045">
    <property type="entry name" value="MoaC"/>
</dbReference>
<dbReference type="InterPro" id="IPR047594">
    <property type="entry name" value="MoaC_bact/euk"/>
</dbReference>
<dbReference type="InterPro" id="IPR036522">
    <property type="entry name" value="MoaC_sf"/>
</dbReference>
<dbReference type="InterPro" id="IPR050105">
    <property type="entry name" value="MoCo_biosynth_MoaA/MoaC"/>
</dbReference>
<dbReference type="InterPro" id="IPR002820">
    <property type="entry name" value="Mopterin_CF_biosynth-C_dom"/>
</dbReference>
<dbReference type="NCBIfam" id="TIGR00581">
    <property type="entry name" value="moaC"/>
    <property type="match status" value="1"/>
</dbReference>
<dbReference type="NCBIfam" id="NF006870">
    <property type="entry name" value="PRK09364.1"/>
    <property type="match status" value="1"/>
</dbReference>
<dbReference type="PANTHER" id="PTHR22960:SF0">
    <property type="entry name" value="MOLYBDENUM COFACTOR BIOSYNTHESIS PROTEIN 1"/>
    <property type="match status" value="1"/>
</dbReference>
<dbReference type="PANTHER" id="PTHR22960">
    <property type="entry name" value="MOLYBDOPTERIN COFACTOR SYNTHESIS PROTEIN A"/>
    <property type="match status" value="1"/>
</dbReference>
<dbReference type="Pfam" id="PF01967">
    <property type="entry name" value="MoaC"/>
    <property type="match status" value="1"/>
</dbReference>
<dbReference type="SUPFAM" id="SSF55040">
    <property type="entry name" value="Molybdenum cofactor biosynthesis protein C, MoaC"/>
    <property type="match status" value="1"/>
</dbReference>
<comment type="function">
    <text evidence="1">Catalyzes the conversion of (8S)-3',8-cyclo-7,8-dihydroguanosine 5'-triphosphate to cyclic pyranopterin monophosphate (cPMP).</text>
</comment>
<comment type="catalytic activity">
    <reaction evidence="1">
        <text>(8S)-3',8-cyclo-7,8-dihydroguanosine 5'-triphosphate = cyclic pyranopterin phosphate + diphosphate</text>
        <dbReference type="Rhea" id="RHEA:49580"/>
        <dbReference type="ChEBI" id="CHEBI:33019"/>
        <dbReference type="ChEBI" id="CHEBI:59648"/>
        <dbReference type="ChEBI" id="CHEBI:131766"/>
        <dbReference type="EC" id="4.6.1.17"/>
    </reaction>
</comment>
<comment type="pathway">
    <text evidence="1">Cofactor biosynthesis; molybdopterin biosynthesis.</text>
</comment>
<comment type="subunit">
    <text evidence="1">Homohexamer; trimer of dimers.</text>
</comment>
<comment type="similarity">
    <text evidence="1">Belongs to the MoaC family.</text>
</comment>
<feature type="chain" id="PRO_1000213993" description="Cyclic pyranopterin monophosphate synthase">
    <location>
        <begin position="1"/>
        <end position="160"/>
    </location>
</feature>
<feature type="active site" evidence="1">
    <location>
        <position position="129"/>
    </location>
</feature>
<feature type="binding site" evidence="1">
    <location>
        <begin position="76"/>
        <end position="78"/>
    </location>
    <ligand>
        <name>substrate</name>
    </ligand>
</feature>
<feature type="binding site" evidence="1">
    <location>
        <begin position="114"/>
        <end position="115"/>
    </location>
    <ligand>
        <name>substrate</name>
    </ligand>
</feature>
<name>MOAC_SACD2</name>
<accession>Q21HG1</accession>
<reference key="1">
    <citation type="journal article" date="2008" name="PLoS Genet.">
        <title>Complete genome sequence of the complex carbohydrate-degrading marine bacterium, Saccharophagus degradans strain 2-40 T.</title>
        <authorList>
            <person name="Weiner R.M."/>
            <person name="Taylor L.E. II"/>
            <person name="Henrissat B."/>
            <person name="Hauser L."/>
            <person name="Land M."/>
            <person name="Coutinho P.M."/>
            <person name="Rancurel C."/>
            <person name="Saunders E.H."/>
            <person name="Longmire A.G."/>
            <person name="Zhang H."/>
            <person name="Bayer E.A."/>
            <person name="Gilbert H.J."/>
            <person name="Larimer F."/>
            <person name="Zhulin I.B."/>
            <person name="Ekborg N.A."/>
            <person name="Lamed R."/>
            <person name="Richardson P.M."/>
            <person name="Borovok I."/>
            <person name="Hutcheson S."/>
        </authorList>
    </citation>
    <scope>NUCLEOTIDE SEQUENCE [LARGE SCALE GENOMIC DNA]</scope>
    <source>
        <strain>2-40 / ATCC 43961 / DSM 17024</strain>
    </source>
</reference>
<evidence type="ECO:0000255" key="1">
    <source>
        <dbReference type="HAMAP-Rule" id="MF_01224"/>
    </source>
</evidence>
<proteinExistence type="inferred from homology"/>
<sequence length="160" mass="17009">MTSNLTHLNEKGEAHMVDVGGKAVTKRTARARSYVNMTAETLAVVANGDVAKGDVFATARIAGIQAAKKCADLIPLCHPLMLTRVTVDITIEANANRLCIEAQCELDGKTGVEMEALTACSVAALTVYDMCKALDKGIVISDTRLISKTGGKSGDWFYSE</sequence>